<evidence type="ECO:0000255" key="1">
    <source>
        <dbReference type="HAMAP-Rule" id="MF_00835"/>
    </source>
</evidence>
<sequence length="262" mass="28500">MTSAIKPKAGTRPSKARIRQSFERAAPTYDDAAAIQRRICIRLAEGLPDIAPTHLLDAGCGTGYAQANLQTRFPDAHRVALDLSPGMLQRVATPCCRVAGDLEHLPLADSSLDLYWSSLAVQWCDLAVALREAHRTLRPGGVIALASLGPATFHELRHAFADVDDHRHTLAFHSPGEIRQLASLAGLAAIDIKKSTEIAHYPDFKTLLRAVKAIGANQLGDGRRTSLMSRSSFQLAESACEQLRTPAGLPLTYDVIYLYARK</sequence>
<protein>
    <recommendedName>
        <fullName evidence="1">Malonyl-[acyl-carrier protein] O-methyltransferase</fullName>
        <shortName evidence="1">Malonyl-ACP O-methyltransferase</shortName>
        <ecNumber evidence="1">2.1.1.197</ecNumber>
    </recommendedName>
    <alternativeName>
        <fullName evidence="1">Biotin synthesis protein BioC</fullName>
    </alternativeName>
</protein>
<accession>Q47C02</accession>
<proteinExistence type="inferred from homology"/>
<name>BIOC_DECAR</name>
<feature type="chain" id="PRO_0000412493" description="Malonyl-[acyl-carrier protein] O-methyltransferase">
    <location>
        <begin position="1"/>
        <end position="262"/>
    </location>
</feature>
<dbReference type="EC" id="2.1.1.197" evidence="1"/>
<dbReference type="EMBL" id="CP000089">
    <property type="protein sequence ID" value="AAZ47629.1"/>
    <property type="molecule type" value="Genomic_DNA"/>
</dbReference>
<dbReference type="SMR" id="Q47C02"/>
<dbReference type="STRING" id="159087.Daro_2899"/>
<dbReference type="KEGG" id="dar:Daro_2899"/>
<dbReference type="eggNOG" id="COG2226">
    <property type="taxonomic scope" value="Bacteria"/>
</dbReference>
<dbReference type="HOGENOM" id="CLU_046586_2_2_4"/>
<dbReference type="OrthoDB" id="9760689at2"/>
<dbReference type="UniPathway" id="UPA00078"/>
<dbReference type="GO" id="GO:0010340">
    <property type="term" value="F:carboxyl-O-methyltransferase activity"/>
    <property type="evidence" value="ECO:0007669"/>
    <property type="project" value="UniProtKB-UniRule"/>
</dbReference>
<dbReference type="GO" id="GO:0102130">
    <property type="term" value="F:malonyl-CoA methyltransferase activity"/>
    <property type="evidence" value="ECO:0007669"/>
    <property type="project" value="UniProtKB-EC"/>
</dbReference>
<dbReference type="GO" id="GO:0008757">
    <property type="term" value="F:S-adenosylmethionine-dependent methyltransferase activity"/>
    <property type="evidence" value="ECO:0007669"/>
    <property type="project" value="InterPro"/>
</dbReference>
<dbReference type="GO" id="GO:0009102">
    <property type="term" value="P:biotin biosynthetic process"/>
    <property type="evidence" value="ECO:0007669"/>
    <property type="project" value="UniProtKB-UniRule"/>
</dbReference>
<dbReference type="GO" id="GO:0032259">
    <property type="term" value="P:methylation"/>
    <property type="evidence" value="ECO:0007669"/>
    <property type="project" value="UniProtKB-KW"/>
</dbReference>
<dbReference type="CDD" id="cd02440">
    <property type="entry name" value="AdoMet_MTases"/>
    <property type="match status" value="1"/>
</dbReference>
<dbReference type="Gene3D" id="3.40.50.150">
    <property type="entry name" value="Vaccinia Virus protein VP39"/>
    <property type="match status" value="1"/>
</dbReference>
<dbReference type="HAMAP" id="MF_00835">
    <property type="entry name" value="BioC"/>
    <property type="match status" value="1"/>
</dbReference>
<dbReference type="InterPro" id="IPR011814">
    <property type="entry name" value="BioC"/>
</dbReference>
<dbReference type="InterPro" id="IPR050602">
    <property type="entry name" value="Malonyl-ACP_OMT"/>
</dbReference>
<dbReference type="InterPro" id="IPR013216">
    <property type="entry name" value="Methyltransf_11"/>
</dbReference>
<dbReference type="InterPro" id="IPR029063">
    <property type="entry name" value="SAM-dependent_MTases_sf"/>
</dbReference>
<dbReference type="NCBIfam" id="TIGR02072">
    <property type="entry name" value="BioC"/>
    <property type="match status" value="1"/>
</dbReference>
<dbReference type="PANTHER" id="PTHR13090">
    <property type="entry name" value="ARGININE-HYDROXYLASE NDUFAF5, MITOCHONDRIAL"/>
    <property type="match status" value="1"/>
</dbReference>
<dbReference type="PANTHER" id="PTHR13090:SF1">
    <property type="entry name" value="ARGININE-HYDROXYLASE NDUFAF5, MITOCHONDRIAL"/>
    <property type="match status" value="1"/>
</dbReference>
<dbReference type="Pfam" id="PF08241">
    <property type="entry name" value="Methyltransf_11"/>
    <property type="match status" value="1"/>
</dbReference>
<dbReference type="SUPFAM" id="SSF53335">
    <property type="entry name" value="S-adenosyl-L-methionine-dependent methyltransferases"/>
    <property type="match status" value="1"/>
</dbReference>
<gene>
    <name evidence="1" type="primary">bioC</name>
    <name type="ordered locus">Daro_2899</name>
</gene>
<reference key="1">
    <citation type="journal article" date="2009" name="BMC Genomics">
        <title>Metabolic analysis of the soil microbe Dechloromonas aromatica str. RCB: indications of a surprisingly complex life-style and cryptic anaerobic pathways for aromatic degradation.</title>
        <authorList>
            <person name="Salinero K.K."/>
            <person name="Keller K."/>
            <person name="Feil W.S."/>
            <person name="Feil H."/>
            <person name="Trong S."/>
            <person name="Di Bartolo G."/>
            <person name="Lapidus A."/>
        </authorList>
    </citation>
    <scope>NUCLEOTIDE SEQUENCE [LARGE SCALE GENOMIC DNA]</scope>
    <source>
        <strain>RCB</strain>
    </source>
</reference>
<comment type="function">
    <text evidence="1">Converts the free carboxyl group of a malonyl-thioester to its methyl ester by transfer of a methyl group from S-adenosyl-L-methionine (SAM). It allows to synthesize pimeloyl-ACP via the fatty acid synthetic pathway.</text>
</comment>
<comment type="catalytic activity">
    <reaction evidence="1">
        <text>malonyl-[ACP] + S-adenosyl-L-methionine = malonyl-[ACP] methyl ester + S-adenosyl-L-homocysteine</text>
        <dbReference type="Rhea" id="RHEA:17105"/>
        <dbReference type="Rhea" id="RHEA-COMP:9623"/>
        <dbReference type="Rhea" id="RHEA-COMP:9954"/>
        <dbReference type="ChEBI" id="CHEBI:57856"/>
        <dbReference type="ChEBI" id="CHEBI:59789"/>
        <dbReference type="ChEBI" id="CHEBI:78449"/>
        <dbReference type="ChEBI" id="CHEBI:78845"/>
        <dbReference type="EC" id="2.1.1.197"/>
    </reaction>
</comment>
<comment type="pathway">
    <text evidence="1">Cofactor biosynthesis; biotin biosynthesis.</text>
</comment>
<comment type="similarity">
    <text evidence="1">Belongs to the methyltransferase superfamily.</text>
</comment>
<organism>
    <name type="scientific">Dechloromonas aromatica (strain RCB)</name>
    <dbReference type="NCBI Taxonomy" id="159087"/>
    <lineage>
        <taxon>Bacteria</taxon>
        <taxon>Pseudomonadati</taxon>
        <taxon>Pseudomonadota</taxon>
        <taxon>Betaproteobacteria</taxon>
        <taxon>Rhodocyclales</taxon>
        <taxon>Azonexaceae</taxon>
        <taxon>Dechloromonas</taxon>
    </lineage>
</organism>
<keyword id="KW-0093">Biotin biosynthesis</keyword>
<keyword id="KW-0489">Methyltransferase</keyword>
<keyword id="KW-0949">S-adenosyl-L-methionine</keyword>
<keyword id="KW-0808">Transferase</keyword>